<sequence>MTELSANHGGSAKGTENPFEYDYETVRKGGLIFAGLAFVVGLLILLSKRFRCGGSKKHRQVNEDEL</sequence>
<dbReference type="EMBL" id="X70062">
    <property type="protein sequence ID" value="CAA49666.1"/>
    <property type="status" value="ALT_FRAME"/>
    <property type="molecule type" value="mRNA"/>
</dbReference>
<dbReference type="EMBL" id="AF129400">
    <property type="protein sequence ID" value="AAD32613.1"/>
    <property type="molecule type" value="mRNA"/>
</dbReference>
<dbReference type="EMBL" id="AF233060">
    <property type="protein sequence ID" value="AAF36985.1"/>
    <property type="molecule type" value="mRNA"/>
</dbReference>
<dbReference type="PIR" id="B46435">
    <property type="entry name" value="B46435"/>
</dbReference>
<dbReference type="RefSeq" id="NP_059045.2">
    <molecule id="Q04679-2"/>
    <property type="nucleotide sequence ID" value="NM_017349.2"/>
</dbReference>
<dbReference type="RefSeq" id="NP_663769.1">
    <molecule id="Q04679-1"/>
    <property type="nucleotide sequence ID" value="NM_145717.2"/>
</dbReference>
<dbReference type="RefSeq" id="XP_006242973.1">
    <property type="nucleotide sequence ID" value="XM_006242911.3"/>
</dbReference>
<dbReference type="RefSeq" id="XP_006242974.1">
    <property type="nucleotide sequence ID" value="XM_006242912.3"/>
</dbReference>
<dbReference type="FunCoup" id="Q04679">
    <property type="interactions" value="115"/>
</dbReference>
<dbReference type="STRING" id="10116.ENSRNOP00000022074"/>
<dbReference type="PaxDb" id="10116-ENSRNOP00000022074"/>
<dbReference type="GeneID" id="29639"/>
<dbReference type="KEGG" id="rno:29639"/>
<dbReference type="UCSC" id="RGD:2173">
    <molecule id="Q04679-1"/>
    <property type="organism name" value="rat"/>
</dbReference>
<dbReference type="AGR" id="RGD:2173"/>
<dbReference type="CTD" id="486"/>
<dbReference type="RGD" id="2173">
    <property type="gene designation" value="Fxyd2"/>
</dbReference>
<dbReference type="VEuPathDB" id="HostDB:ENSRNOG00000016469"/>
<dbReference type="eggNOG" id="ENOG502SGMI">
    <property type="taxonomic scope" value="Eukaryota"/>
</dbReference>
<dbReference type="HOGENOM" id="CLU_171208_4_0_1"/>
<dbReference type="InParanoid" id="Q04679"/>
<dbReference type="OrthoDB" id="8425at9989"/>
<dbReference type="PhylomeDB" id="Q04679"/>
<dbReference type="Reactome" id="R-RNO-5578775">
    <property type="pathway name" value="Ion homeostasis"/>
</dbReference>
<dbReference type="Reactome" id="R-RNO-936837">
    <property type="pathway name" value="Ion transport by P-type ATPases"/>
</dbReference>
<dbReference type="SABIO-RK" id="Q04679"/>
<dbReference type="PRO" id="PR:Q04679"/>
<dbReference type="Proteomes" id="UP000002494">
    <property type="component" value="Chromosome 8"/>
</dbReference>
<dbReference type="Bgee" id="ENSRNOG00000016469">
    <property type="expression patterns" value="Expressed in kidney and 19 other cell types or tissues"/>
</dbReference>
<dbReference type="GO" id="GO:0016323">
    <property type="term" value="C:basolateral plasma membrane"/>
    <property type="evidence" value="ECO:0000314"/>
    <property type="project" value="RGD"/>
</dbReference>
<dbReference type="GO" id="GO:0016020">
    <property type="term" value="C:membrane"/>
    <property type="evidence" value="ECO:0000266"/>
    <property type="project" value="RGD"/>
</dbReference>
<dbReference type="GO" id="GO:0005890">
    <property type="term" value="C:sodium:potassium-exchanging ATPase complex"/>
    <property type="evidence" value="ECO:0000314"/>
    <property type="project" value="RGD"/>
</dbReference>
<dbReference type="GO" id="GO:0001671">
    <property type="term" value="F:ATPase activator activity"/>
    <property type="evidence" value="ECO:0000266"/>
    <property type="project" value="RGD"/>
</dbReference>
<dbReference type="GO" id="GO:0030674">
    <property type="term" value="F:protein-macromolecule adaptor activity"/>
    <property type="evidence" value="ECO:0000266"/>
    <property type="project" value="RGD"/>
</dbReference>
<dbReference type="GO" id="GO:0017080">
    <property type="term" value="F:sodium channel regulator activity"/>
    <property type="evidence" value="ECO:0000266"/>
    <property type="project" value="RGD"/>
</dbReference>
<dbReference type="GO" id="GO:0071475">
    <property type="term" value="P:cellular hyperosmotic salinity response"/>
    <property type="evidence" value="ECO:0000270"/>
    <property type="project" value="RGD"/>
</dbReference>
<dbReference type="GO" id="GO:0098662">
    <property type="term" value="P:inorganic cation transmembrane transport"/>
    <property type="evidence" value="ECO:0000314"/>
    <property type="project" value="RGD"/>
</dbReference>
<dbReference type="GO" id="GO:0030007">
    <property type="term" value="P:intracellular potassium ion homeostasis"/>
    <property type="evidence" value="ECO:0000266"/>
    <property type="project" value="RGD"/>
</dbReference>
<dbReference type="GO" id="GO:0006883">
    <property type="term" value="P:intracellular sodium ion homeostasis"/>
    <property type="evidence" value="ECO:0000266"/>
    <property type="project" value="RGD"/>
</dbReference>
<dbReference type="GO" id="GO:0008285">
    <property type="term" value="P:negative regulation of cell population proliferation"/>
    <property type="evidence" value="ECO:0000315"/>
    <property type="project" value="RGD"/>
</dbReference>
<dbReference type="GO" id="GO:1903278">
    <property type="term" value="P:positive regulation of sodium ion export across plasma membrane"/>
    <property type="evidence" value="ECO:0000318"/>
    <property type="project" value="GO_Central"/>
</dbReference>
<dbReference type="GO" id="GO:1990573">
    <property type="term" value="P:potassium ion import across plasma membrane"/>
    <property type="evidence" value="ECO:0000266"/>
    <property type="project" value="RGD"/>
</dbReference>
<dbReference type="GO" id="GO:0036376">
    <property type="term" value="P:sodium ion export across plasma membrane"/>
    <property type="evidence" value="ECO:0000266"/>
    <property type="project" value="RGD"/>
</dbReference>
<dbReference type="GO" id="GO:0055085">
    <property type="term" value="P:transmembrane transport"/>
    <property type="evidence" value="ECO:0000266"/>
    <property type="project" value="RGD"/>
</dbReference>
<dbReference type="CDD" id="cd20318">
    <property type="entry name" value="FXYD2"/>
    <property type="match status" value="1"/>
</dbReference>
<dbReference type="FunFam" id="1.20.5.780:FF:000004">
    <property type="entry name" value="FXYD domain-containing ion transport regulator"/>
    <property type="match status" value="1"/>
</dbReference>
<dbReference type="Gene3D" id="1.20.5.780">
    <property type="entry name" value="Single helix bin"/>
    <property type="match status" value="1"/>
</dbReference>
<dbReference type="InterPro" id="IPR047282">
    <property type="entry name" value="ATNG"/>
</dbReference>
<dbReference type="InterPro" id="IPR047297">
    <property type="entry name" value="FXYD_motif"/>
</dbReference>
<dbReference type="InterPro" id="IPR000272">
    <property type="entry name" value="Ion-transport_regulator_FXYD"/>
</dbReference>
<dbReference type="PANTHER" id="PTHR14132">
    <property type="entry name" value="SODIUM/POTASSIUM-TRANSPORTING ATPASE SUBUNIT GAMMA"/>
    <property type="match status" value="1"/>
</dbReference>
<dbReference type="PANTHER" id="PTHR14132:SF3">
    <property type="entry name" value="SODIUM_POTASSIUM-TRANSPORTING ATPASE SUBUNIT GAMMA"/>
    <property type="match status" value="1"/>
</dbReference>
<dbReference type="Pfam" id="PF02038">
    <property type="entry name" value="ATP1G1_PLM_MAT8"/>
    <property type="match status" value="1"/>
</dbReference>
<dbReference type="PROSITE" id="PS01310">
    <property type="entry name" value="FXYD"/>
    <property type="match status" value="1"/>
</dbReference>
<comment type="function">
    <text>May be involved in forming the receptor site for cardiac glycoside binding or may modulate the transport function of the sodium ATPase.</text>
</comment>
<comment type="subunit">
    <text evidence="1">Regulatory subunit of the sodium/potassium-transporting ATPase which is composed of a catalytic alpha subunit, an auxiliary non-catalytic beta subunit and an additional regulatory subunit.</text>
</comment>
<comment type="subcellular location">
    <subcellularLocation>
        <location evidence="4">Membrane</location>
        <topology evidence="4">Single-pass type III membrane protein</topology>
    </subcellularLocation>
</comment>
<comment type="alternative products">
    <event type="alternative splicing"/>
    <isoform>
        <id>Q04679-1</id>
        <name>1</name>
        <name>A</name>
        <sequence type="displayed"/>
    </isoform>
    <isoform>
        <id>Q04679-2</id>
        <name>2</name>
        <name>B</name>
        <sequence type="described" ref="VSP_001583"/>
    </isoform>
</comment>
<comment type="tissue specificity">
    <text>Highest levels expressed in the kidney and spleen. Restricted to the basolateral membrane in renal epithelial cells and varies in its level of expression along the nephron.</text>
</comment>
<comment type="similarity">
    <text evidence="4">Belongs to the FXYD family.</text>
</comment>
<comment type="sequence caution" evidence="4">
    <conflict type="frameshift">
        <sequence resource="EMBL-CDS" id="CAA49666"/>
    </conflict>
</comment>
<keyword id="KW-0025">Alternative splicing</keyword>
<keyword id="KW-0406">Ion transport</keyword>
<keyword id="KW-0472">Membrane</keyword>
<keyword id="KW-0630">Potassium</keyword>
<keyword id="KW-0633">Potassium transport</keyword>
<keyword id="KW-1185">Reference proteome</keyword>
<keyword id="KW-0915">Sodium</keyword>
<keyword id="KW-0739">Sodium transport</keyword>
<keyword id="KW-0740">Sodium/potassium transport</keyword>
<keyword id="KW-0812">Transmembrane</keyword>
<keyword id="KW-1133">Transmembrane helix</keyword>
<keyword id="KW-0813">Transport</keyword>
<proteinExistence type="evidence at transcript level"/>
<gene>
    <name type="primary">Fxyd2</name>
    <name type="synonym">Atp1c</name>
    <name type="synonym">Atp1g1</name>
</gene>
<protein>
    <recommendedName>
        <fullName>Sodium/potassium-transporting ATPase subunit gamma</fullName>
        <shortName>Na(+)/K(+) ATPase subunit gamma</shortName>
    </recommendedName>
    <alternativeName>
        <fullName>FXYD domain-containing ion transport regulator 2</fullName>
    </alternativeName>
    <alternativeName>
        <fullName>Sodium pump gamma chain</fullName>
    </alternativeName>
</protein>
<reference key="1">
    <citation type="journal article" date="1993" name="J. Cell Biol.">
        <title>Molecular cloning and immunological characterization of the gamma polypeptide, a small protein associated with the Na,K-ATPase.</title>
        <authorList>
            <person name="Mercer R.W."/>
            <person name="Biemesderfer D."/>
            <person name="Bliss D.P. Jr."/>
            <person name="Collins J.H."/>
            <person name="Forbush B. III"/>
        </authorList>
    </citation>
    <scope>NUCLEOTIDE SEQUENCE [MRNA] (ISOFORM 1)</scope>
    <source>
        <tissue>Kidney</tissue>
    </source>
</reference>
<reference key="2">
    <citation type="journal article" date="1999" name="J. Biol. Chem.">
        <title>Expression and functional role of the gamma subunit of the Na,K-ATPase in mammalian cells.</title>
        <authorList>
            <person name="Therien A.G."/>
            <person name="Karlish S.J."/>
            <person name="Blostein R."/>
        </authorList>
    </citation>
    <scope>NUCLEOTIDE SEQUENCE [MRNA] (ISOFORM 1)</scope>
    <source>
        <strain>Sprague-Dawley</strain>
    </source>
</reference>
<reference key="3">
    <citation type="journal article" date="2002" name="Am. J. Physiol.">
        <title>Distribution and oligomeric association of splice forms of Na(+)-K(+)-ATPase regulatory gamma-subunit in rat kidney.</title>
        <authorList>
            <person name="Arystarkhova E."/>
            <person name="Wetzel R.K."/>
            <person name="Sweadner K.J."/>
        </authorList>
    </citation>
    <scope>NUCLEOTIDE SEQUENCE [MRNA] (ISOFORM 2)</scope>
</reference>
<organism>
    <name type="scientific">Rattus norvegicus</name>
    <name type="common">Rat</name>
    <dbReference type="NCBI Taxonomy" id="10116"/>
    <lineage>
        <taxon>Eukaryota</taxon>
        <taxon>Metazoa</taxon>
        <taxon>Chordata</taxon>
        <taxon>Craniata</taxon>
        <taxon>Vertebrata</taxon>
        <taxon>Euteleostomi</taxon>
        <taxon>Mammalia</taxon>
        <taxon>Eutheria</taxon>
        <taxon>Euarchontoglires</taxon>
        <taxon>Glires</taxon>
        <taxon>Rodentia</taxon>
        <taxon>Myomorpha</taxon>
        <taxon>Muroidea</taxon>
        <taxon>Muridae</taxon>
        <taxon>Murinae</taxon>
        <taxon>Rattus</taxon>
    </lineage>
</organism>
<feature type="chain" id="PRO_0000148187" description="Sodium/potassium-transporting ATPase subunit gamma">
    <location>
        <begin position="1"/>
        <end position="66"/>
    </location>
</feature>
<feature type="transmembrane region" description="Helical" evidence="2">
    <location>
        <begin position="29"/>
        <end position="46"/>
    </location>
</feature>
<feature type="splice variant" id="VSP_001583" description="In isoform 2." evidence="3">
    <original>MTELSANH</original>
    <variation>MDRWYL</variation>
    <location>
        <begin position="1"/>
        <end position="8"/>
    </location>
</feature>
<accession>Q04679</accession>
<accession>Q9JKN3</accession>
<accession>Q9WUD3</accession>
<name>ATNG_RAT</name>
<evidence type="ECO:0000250" key="1">
    <source>
        <dbReference type="UniProtKB" id="O13001"/>
    </source>
</evidence>
<evidence type="ECO:0000255" key="2"/>
<evidence type="ECO:0000303" key="3">
    <source>
    </source>
</evidence>
<evidence type="ECO:0000305" key="4"/>